<keyword id="KW-0963">Cytoplasm</keyword>
<keyword id="KW-1185">Reference proteome</keyword>
<evidence type="ECO:0000255" key="1">
    <source>
        <dbReference type="HAMAP-Rule" id="MF_01114"/>
    </source>
</evidence>
<organism>
    <name type="scientific">Chromohalobacter salexigens (strain ATCC BAA-138 / DSM 3043 / CIP 106854 / NCIMB 13768 / 1H11)</name>
    <dbReference type="NCBI Taxonomy" id="290398"/>
    <lineage>
        <taxon>Bacteria</taxon>
        <taxon>Pseudomonadati</taxon>
        <taxon>Pseudomonadota</taxon>
        <taxon>Gammaproteobacteria</taxon>
        <taxon>Oceanospirillales</taxon>
        <taxon>Halomonadaceae</taxon>
        <taxon>Chromohalobacter</taxon>
    </lineage>
</organism>
<feature type="chain" id="PRO_1000164014" description="Regulatory protein RecX">
    <location>
        <begin position="1"/>
        <end position="152"/>
    </location>
</feature>
<gene>
    <name evidence="1" type="primary">recX</name>
    <name type="ordered locus">Csal_0624</name>
</gene>
<dbReference type="EMBL" id="CP000285">
    <property type="protein sequence ID" value="ABE57986.1"/>
    <property type="molecule type" value="Genomic_DNA"/>
</dbReference>
<dbReference type="RefSeq" id="WP_011505932.1">
    <property type="nucleotide sequence ID" value="NC_007963.1"/>
</dbReference>
<dbReference type="SMR" id="Q1QZX2"/>
<dbReference type="STRING" id="290398.Csal_0624"/>
<dbReference type="GeneID" id="95333379"/>
<dbReference type="KEGG" id="csa:Csal_0624"/>
<dbReference type="eggNOG" id="COG2137">
    <property type="taxonomic scope" value="Bacteria"/>
</dbReference>
<dbReference type="HOGENOM" id="CLU_066607_3_2_6"/>
<dbReference type="OrthoDB" id="7066780at2"/>
<dbReference type="Proteomes" id="UP000000239">
    <property type="component" value="Chromosome"/>
</dbReference>
<dbReference type="GO" id="GO:0005737">
    <property type="term" value="C:cytoplasm"/>
    <property type="evidence" value="ECO:0007669"/>
    <property type="project" value="UniProtKB-SubCell"/>
</dbReference>
<dbReference type="GO" id="GO:0006282">
    <property type="term" value="P:regulation of DNA repair"/>
    <property type="evidence" value="ECO:0007669"/>
    <property type="project" value="UniProtKB-UniRule"/>
</dbReference>
<dbReference type="Gene3D" id="1.10.10.10">
    <property type="entry name" value="Winged helix-like DNA-binding domain superfamily/Winged helix DNA-binding domain"/>
    <property type="match status" value="3"/>
</dbReference>
<dbReference type="HAMAP" id="MF_01114">
    <property type="entry name" value="RecX"/>
    <property type="match status" value="1"/>
</dbReference>
<dbReference type="InterPro" id="IPR053926">
    <property type="entry name" value="RecX_HTH_1st"/>
</dbReference>
<dbReference type="InterPro" id="IPR053924">
    <property type="entry name" value="RecX_HTH_2nd"/>
</dbReference>
<dbReference type="InterPro" id="IPR053925">
    <property type="entry name" value="RecX_HTH_3rd"/>
</dbReference>
<dbReference type="InterPro" id="IPR003783">
    <property type="entry name" value="Regulatory_RecX"/>
</dbReference>
<dbReference type="InterPro" id="IPR036388">
    <property type="entry name" value="WH-like_DNA-bd_sf"/>
</dbReference>
<dbReference type="PANTHER" id="PTHR33602">
    <property type="entry name" value="REGULATORY PROTEIN RECX FAMILY PROTEIN"/>
    <property type="match status" value="1"/>
</dbReference>
<dbReference type="PANTHER" id="PTHR33602:SF1">
    <property type="entry name" value="REGULATORY PROTEIN RECX FAMILY PROTEIN"/>
    <property type="match status" value="1"/>
</dbReference>
<dbReference type="Pfam" id="PF21982">
    <property type="entry name" value="RecX_HTH1"/>
    <property type="match status" value="1"/>
</dbReference>
<dbReference type="Pfam" id="PF02631">
    <property type="entry name" value="RecX_HTH2"/>
    <property type="match status" value="1"/>
</dbReference>
<dbReference type="Pfam" id="PF21981">
    <property type="entry name" value="RecX_HTH3"/>
    <property type="match status" value="1"/>
</dbReference>
<accession>Q1QZX2</accession>
<sequence>MSTQEATPRDDAIRLLARRDYSRSELMSRLAARGHAPDDIASLLDALADEGLQSDARFAEQFVRSRLSRGQGAMKIRAELGARGVTDEVAREALEGEAPDWHRLACEALAKRFDSPGRDPRERAKRERFLASRGFDFEQVRHAMAHAWENTR</sequence>
<reference key="1">
    <citation type="journal article" date="2011" name="Stand. Genomic Sci.">
        <title>Complete genome sequence of the halophilic and highly halotolerant Chromohalobacter salexigens type strain (1H11(T)).</title>
        <authorList>
            <person name="Copeland A."/>
            <person name="O'Connor K."/>
            <person name="Lucas S."/>
            <person name="Lapidus A."/>
            <person name="Berry K.W."/>
            <person name="Detter J.C."/>
            <person name="Del Rio T.G."/>
            <person name="Hammon N."/>
            <person name="Dalin E."/>
            <person name="Tice H."/>
            <person name="Pitluck S."/>
            <person name="Bruce D."/>
            <person name="Goodwin L."/>
            <person name="Han C."/>
            <person name="Tapia R."/>
            <person name="Saunders E."/>
            <person name="Schmutz J."/>
            <person name="Brettin T."/>
            <person name="Larimer F."/>
            <person name="Land M."/>
            <person name="Hauser L."/>
            <person name="Vargas C."/>
            <person name="Nieto J.J."/>
            <person name="Kyrpides N.C."/>
            <person name="Ivanova N."/>
            <person name="Goker M."/>
            <person name="Klenk H.P."/>
            <person name="Csonka L.N."/>
            <person name="Woyke T."/>
        </authorList>
    </citation>
    <scope>NUCLEOTIDE SEQUENCE [LARGE SCALE GENOMIC DNA]</scope>
    <source>
        <strain>ATCC BAA-138 / DSM 3043 / CIP 106854 / NCIMB 13768 / 1H11</strain>
    </source>
</reference>
<protein>
    <recommendedName>
        <fullName evidence="1">Regulatory protein RecX</fullName>
    </recommendedName>
</protein>
<name>RECX_CHRSD</name>
<comment type="function">
    <text evidence="1">Modulates RecA activity.</text>
</comment>
<comment type="subcellular location">
    <subcellularLocation>
        <location evidence="1">Cytoplasm</location>
    </subcellularLocation>
</comment>
<comment type="similarity">
    <text evidence="1">Belongs to the RecX family.</text>
</comment>
<proteinExistence type="inferred from homology"/>